<reference key="1">
    <citation type="journal article" date="2002" name="Nucleic Acids Res.">
        <title>Genome sequence of Shigella flexneri 2a: insights into pathogenicity through comparison with genomes of Escherichia coli K12 and O157.</title>
        <authorList>
            <person name="Jin Q."/>
            <person name="Yuan Z."/>
            <person name="Xu J."/>
            <person name="Wang Y."/>
            <person name="Shen Y."/>
            <person name="Lu W."/>
            <person name="Wang J."/>
            <person name="Liu H."/>
            <person name="Yang J."/>
            <person name="Yang F."/>
            <person name="Zhang X."/>
            <person name="Zhang J."/>
            <person name="Yang G."/>
            <person name="Wu H."/>
            <person name="Qu D."/>
            <person name="Dong J."/>
            <person name="Sun L."/>
            <person name="Xue Y."/>
            <person name="Zhao A."/>
            <person name="Gao Y."/>
            <person name="Zhu J."/>
            <person name="Kan B."/>
            <person name="Ding K."/>
            <person name="Chen S."/>
            <person name="Cheng H."/>
            <person name="Yao Z."/>
            <person name="He B."/>
            <person name="Chen R."/>
            <person name="Ma D."/>
            <person name="Qiang B."/>
            <person name="Wen Y."/>
            <person name="Hou Y."/>
            <person name="Yu J."/>
        </authorList>
    </citation>
    <scope>NUCLEOTIDE SEQUENCE [LARGE SCALE GENOMIC DNA]</scope>
    <source>
        <strain>301 / Serotype 2a</strain>
    </source>
</reference>
<reference key="2">
    <citation type="journal article" date="2003" name="Infect. Immun.">
        <title>Complete genome sequence and comparative genomics of Shigella flexneri serotype 2a strain 2457T.</title>
        <authorList>
            <person name="Wei J."/>
            <person name="Goldberg M.B."/>
            <person name="Burland V."/>
            <person name="Venkatesan M.M."/>
            <person name="Deng W."/>
            <person name="Fournier G."/>
            <person name="Mayhew G.F."/>
            <person name="Plunkett G. III"/>
            <person name="Rose D.J."/>
            <person name="Darling A."/>
            <person name="Mau B."/>
            <person name="Perna N.T."/>
            <person name="Payne S.M."/>
            <person name="Runyen-Janecky L.J."/>
            <person name="Zhou S."/>
            <person name="Schwartz D.C."/>
            <person name="Blattner F.R."/>
        </authorList>
    </citation>
    <scope>NUCLEOTIDE SEQUENCE [LARGE SCALE GENOMIC DNA]</scope>
    <source>
        <strain>ATCC 700930 / 2457T / Serotype 2a</strain>
    </source>
</reference>
<protein>
    <recommendedName>
        <fullName evidence="1">Sec-independent protein translocase protein TatA</fullName>
    </recommendedName>
</protein>
<name>TATA_SHIFL</name>
<comment type="function">
    <text evidence="1">Part of the twin-arginine translocation (Tat) system that transports large folded proteins containing a characteristic twin-arginine motif in their signal peptide across membranes. TatA could form the protein-conducting channel of the Tat system.</text>
</comment>
<comment type="subunit">
    <text evidence="1">The Tat system comprises two distinct complexes: a TatABC complex, containing multiple copies of TatA, TatB and TatC subunits, and a separate TatA complex, containing only TatA subunits. Substrates initially bind to the TatABC complex, which probably triggers association of the separate TatA complex to form the active translocon.</text>
</comment>
<comment type="subcellular location">
    <subcellularLocation>
        <location evidence="1">Cell inner membrane</location>
        <topology evidence="1">Single-pass membrane protein</topology>
    </subcellularLocation>
</comment>
<comment type="similarity">
    <text evidence="1">Belongs to the TatA/E family.</text>
</comment>
<comment type="sequence caution" evidence="3">
    <conflict type="erroneous initiation">
        <sequence resource="EMBL-CDS" id="AAN45349"/>
    </conflict>
</comment>
<comment type="sequence caution" evidence="3">
    <conflict type="erroneous initiation">
        <sequence resource="EMBL-CDS" id="AAP18849"/>
    </conflict>
</comment>
<organism>
    <name type="scientific">Shigella flexneri</name>
    <dbReference type="NCBI Taxonomy" id="623"/>
    <lineage>
        <taxon>Bacteria</taxon>
        <taxon>Pseudomonadati</taxon>
        <taxon>Pseudomonadota</taxon>
        <taxon>Gammaproteobacteria</taxon>
        <taxon>Enterobacterales</taxon>
        <taxon>Enterobacteriaceae</taxon>
        <taxon>Shigella</taxon>
    </lineage>
</organism>
<keyword id="KW-0997">Cell inner membrane</keyword>
<keyword id="KW-1003">Cell membrane</keyword>
<keyword id="KW-0472">Membrane</keyword>
<keyword id="KW-0653">Protein transport</keyword>
<keyword id="KW-1185">Reference proteome</keyword>
<keyword id="KW-0811">Translocation</keyword>
<keyword id="KW-0812">Transmembrane</keyword>
<keyword id="KW-1133">Transmembrane helix</keyword>
<keyword id="KW-0813">Transport</keyword>
<sequence length="89" mass="9664">MGGISIWQLLIIAVIVVLLFGTKKLGSIGSDLGASIKGFKKAMSDDEPKQDKTSQDADFTAKTIADKQADTNQEQAKTEDAKRHDKEQV</sequence>
<gene>
    <name evidence="1" type="primary">tatA</name>
    <name type="synonym">mttA1</name>
    <name type="ordered locus">SF3914</name>
    <name type="ordered locus">S3840</name>
</gene>
<proteinExistence type="inferred from homology"/>
<evidence type="ECO:0000255" key="1">
    <source>
        <dbReference type="HAMAP-Rule" id="MF_00236"/>
    </source>
</evidence>
<evidence type="ECO:0000256" key="2">
    <source>
        <dbReference type="SAM" id="MobiDB-lite"/>
    </source>
</evidence>
<evidence type="ECO:0000305" key="3"/>
<dbReference type="EMBL" id="AE005674">
    <property type="protein sequence ID" value="AAN45349.1"/>
    <property type="status" value="ALT_INIT"/>
    <property type="molecule type" value="Genomic_DNA"/>
</dbReference>
<dbReference type="EMBL" id="AE014073">
    <property type="protein sequence ID" value="AAP18849.1"/>
    <property type="status" value="ALT_INIT"/>
    <property type="molecule type" value="Genomic_DNA"/>
</dbReference>
<dbReference type="RefSeq" id="NP_709642.1">
    <property type="nucleotide sequence ID" value="NC_004337.2"/>
</dbReference>
<dbReference type="RefSeq" id="WP_001295260.1">
    <property type="nucleotide sequence ID" value="NZ_WPGW01000036.1"/>
</dbReference>
<dbReference type="BMRB" id="P69431"/>
<dbReference type="SMR" id="P69431"/>
<dbReference type="STRING" id="198214.SF3914"/>
<dbReference type="PaxDb" id="198214-SF3914"/>
<dbReference type="GeneID" id="1026145"/>
<dbReference type="GeneID" id="93778099"/>
<dbReference type="KEGG" id="sfl:SF3914"/>
<dbReference type="KEGG" id="sfx:S3840"/>
<dbReference type="PATRIC" id="fig|198214.7.peg.4614"/>
<dbReference type="HOGENOM" id="CLU_086034_5_1_6"/>
<dbReference type="Proteomes" id="UP000001006">
    <property type="component" value="Chromosome"/>
</dbReference>
<dbReference type="Proteomes" id="UP000002673">
    <property type="component" value="Chromosome"/>
</dbReference>
<dbReference type="GO" id="GO:0033281">
    <property type="term" value="C:TAT protein transport complex"/>
    <property type="evidence" value="ECO:0007669"/>
    <property type="project" value="UniProtKB-UniRule"/>
</dbReference>
<dbReference type="GO" id="GO:0008320">
    <property type="term" value="F:protein transmembrane transporter activity"/>
    <property type="evidence" value="ECO:0007669"/>
    <property type="project" value="UniProtKB-UniRule"/>
</dbReference>
<dbReference type="GO" id="GO:0043953">
    <property type="term" value="P:protein transport by the Tat complex"/>
    <property type="evidence" value="ECO:0007669"/>
    <property type="project" value="UniProtKB-UniRule"/>
</dbReference>
<dbReference type="FunFam" id="1.20.5.3310:FF:000001">
    <property type="entry name" value="Probable Sec-independent protein translocase protein TatE"/>
    <property type="match status" value="1"/>
</dbReference>
<dbReference type="Gene3D" id="1.20.5.3310">
    <property type="match status" value="1"/>
</dbReference>
<dbReference type="HAMAP" id="MF_00236">
    <property type="entry name" value="TatA_E"/>
    <property type="match status" value="1"/>
</dbReference>
<dbReference type="InterPro" id="IPR003369">
    <property type="entry name" value="TatA/B/E"/>
</dbReference>
<dbReference type="InterPro" id="IPR006312">
    <property type="entry name" value="TatA/E"/>
</dbReference>
<dbReference type="NCBIfam" id="NF002922">
    <property type="entry name" value="PRK03554.1"/>
    <property type="match status" value="1"/>
</dbReference>
<dbReference type="NCBIfam" id="TIGR01411">
    <property type="entry name" value="tatAE"/>
    <property type="match status" value="1"/>
</dbReference>
<dbReference type="PANTHER" id="PTHR42982">
    <property type="entry name" value="SEC-INDEPENDENT PROTEIN TRANSLOCASE PROTEIN TATA"/>
    <property type="match status" value="1"/>
</dbReference>
<dbReference type="PANTHER" id="PTHR42982:SF1">
    <property type="entry name" value="SEC-INDEPENDENT PROTEIN TRANSLOCASE PROTEIN TATA"/>
    <property type="match status" value="1"/>
</dbReference>
<dbReference type="Pfam" id="PF02416">
    <property type="entry name" value="TatA_B_E"/>
    <property type="match status" value="1"/>
</dbReference>
<feature type="chain" id="PRO_0000097960" description="Sec-independent protein translocase protein TatA">
    <location>
        <begin position="1"/>
        <end position="89"/>
    </location>
</feature>
<feature type="transmembrane region" description="Helical" evidence="1">
    <location>
        <begin position="1"/>
        <end position="21"/>
    </location>
</feature>
<feature type="region of interest" description="Disordered" evidence="2">
    <location>
        <begin position="65"/>
        <end position="89"/>
    </location>
</feature>
<feature type="compositionally biased region" description="Basic and acidic residues" evidence="2">
    <location>
        <begin position="76"/>
        <end position="89"/>
    </location>
</feature>
<accession>P69431</accession>
<accession>O65938</accession>
<accession>P27856</accession>